<sequence length="164" mass="17427">MIELLSAAETWVAVGFAILMVVFVYFGVHRTVLNALDNRRDRIKAELDEASRLKEEAAKLLADYKARAASAEREAEAIIASAKDEAERIAAEAKAKLEDFVARRTKTAEGKIAMAEAQAIADVRAAAANAAVAAASSILSQSVKGSVADELIGKGIAEVRSKLN</sequence>
<protein>
    <recommendedName>
        <fullName evidence="1">ATP synthase subunit b 1</fullName>
    </recommendedName>
    <alternativeName>
        <fullName evidence="1">ATP synthase F(0) sector subunit b 1</fullName>
    </alternativeName>
    <alternativeName>
        <fullName evidence="1">ATPase subunit I 1</fullName>
    </alternativeName>
    <alternativeName>
        <fullName evidence="1">F-type ATPase subunit b 1</fullName>
        <shortName evidence="1">F-ATPase subunit b 1</shortName>
    </alternativeName>
</protein>
<evidence type="ECO:0000255" key="1">
    <source>
        <dbReference type="HAMAP-Rule" id="MF_01398"/>
    </source>
</evidence>
<accession>Q07H89</accession>
<proteinExistence type="inferred from homology"/>
<comment type="function">
    <text evidence="1">F(1)F(0) ATP synthase produces ATP from ADP in the presence of a proton or sodium gradient. F-type ATPases consist of two structural domains, F(1) containing the extramembraneous catalytic core and F(0) containing the membrane proton channel, linked together by a central stalk and a peripheral stalk. During catalysis, ATP synthesis in the catalytic domain of F(1) is coupled via a rotary mechanism of the central stalk subunits to proton translocation.</text>
</comment>
<comment type="function">
    <text evidence="1">Component of the F(0) channel, it forms part of the peripheral stalk, linking F(1) to F(0).</text>
</comment>
<comment type="subunit">
    <text evidence="1">F-type ATPases have 2 components, F(1) - the catalytic core - and F(0) - the membrane proton channel. F(1) has five subunits: alpha(3), beta(3), gamma(1), delta(1), epsilon(1). F(0) has three main subunits: a(1), b(2) and c(10-14). The alpha and beta chains form an alternating ring which encloses part of the gamma chain. F(1) is attached to F(0) by a central stalk formed by the gamma and epsilon chains, while a peripheral stalk is formed by the delta and b chains.</text>
</comment>
<comment type="subcellular location">
    <subcellularLocation>
        <location evidence="1">Cell inner membrane</location>
        <topology evidence="1">Single-pass membrane protein</topology>
    </subcellularLocation>
</comment>
<comment type="similarity">
    <text evidence="1">Belongs to the ATPase B chain family.</text>
</comment>
<keyword id="KW-0066">ATP synthesis</keyword>
<keyword id="KW-0997">Cell inner membrane</keyword>
<keyword id="KW-1003">Cell membrane</keyword>
<keyword id="KW-0138">CF(0)</keyword>
<keyword id="KW-0375">Hydrogen ion transport</keyword>
<keyword id="KW-0406">Ion transport</keyword>
<keyword id="KW-0472">Membrane</keyword>
<keyword id="KW-0812">Transmembrane</keyword>
<keyword id="KW-1133">Transmembrane helix</keyword>
<keyword id="KW-0813">Transport</keyword>
<name>ATPF1_RHOP5</name>
<gene>
    <name evidence="1" type="primary">atpF1</name>
    <name type="ordered locus">RPE_4776</name>
</gene>
<reference key="1">
    <citation type="submission" date="2006-09" db="EMBL/GenBank/DDBJ databases">
        <title>Complete sequence of Rhodopseudomonas palustris BisA53.</title>
        <authorList>
            <consortium name="US DOE Joint Genome Institute"/>
            <person name="Copeland A."/>
            <person name="Lucas S."/>
            <person name="Lapidus A."/>
            <person name="Barry K."/>
            <person name="Detter J.C."/>
            <person name="Glavina del Rio T."/>
            <person name="Hammon N."/>
            <person name="Israni S."/>
            <person name="Dalin E."/>
            <person name="Tice H."/>
            <person name="Pitluck S."/>
            <person name="Chain P."/>
            <person name="Malfatti S."/>
            <person name="Shin M."/>
            <person name="Vergez L."/>
            <person name="Schmutz J."/>
            <person name="Larimer F."/>
            <person name="Land M."/>
            <person name="Hauser L."/>
            <person name="Pelletier D.A."/>
            <person name="Kyrpides N."/>
            <person name="Kim E."/>
            <person name="Harwood C.S."/>
            <person name="Oda Y."/>
            <person name="Richardson P."/>
        </authorList>
    </citation>
    <scope>NUCLEOTIDE SEQUENCE [LARGE SCALE GENOMIC DNA]</scope>
    <source>
        <strain>BisA53</strain>
    </source>
</reference>
<organism>
    <name type="scientific">Rhodopseudomonas palustris (strain BisA53)</name>
    <dbReference type="NCBI Taxonomy" id="316055"/>
    <lineage>
        <taxon>Bacteria</taxon>
        <taxon>Pseudomonadati</taxon>
        <taxon>Pseudomonadota</taxon>
        <taxon>Alphaproteobacteria</taxon>
        <taxon>Hyphomicrobiales</taxon>
        <taxon>Nitrobacteraceae</taxon>
        <taxon>Rhodopseudomonas</taxon>
    </lineage>
</organism>
<dbReference type="EMBL" id="CP000463">
    <property type="protein sequence ID" value="ABJ08695.1"/>
    <property type="molecule type" value="Genomic_DNA"/>
</dbReference>
<dbReference type="SMR" id="Q07H89"/>
<dbReference type="STRING" id="316055.RPE_4776"/>
<dbReference type="KEGG" id="rpe:RPE_4776"/>
<dbReference type="eggNOG" id="COG0711">
    <property type="taxonomic scope" value="Bacteria"/>
</dbReference>
<dbReference type="HOGENOM" id="CLU_079215_6_1_5"/>
<dbReference type="OrthoDB" id="8479836at2"/>
<dbReference type="GO" id="GO:0005886">
    <property type="term" value="C:plasma membrane"/>
    <property type="evidence" value="ECO:0007669"/>
    <property type="project" value="UniProtKB-SubCell"/>
</dbReference>
<dbReference type="GO" id="GO:0045259">
    <property type="term" value="C:proton-transporting ATP synthase complex"/>
    <property type="evidence" value="ECO:0007669"/>
    <property type="project" value="UniProtKB-KW"/>
</dbReference>
<dbReference type="GO" id="GO:0046933">
    <property type="term" value="F:proton-transporting ATP synthase activity, rotational mechanism"/>
    <property type="evidence" value="ECO:0007669"/>
    <property type="project" value="UniProtKB-UniRule"/>
</dbReference>
<dbReference type="GO" id="GO:0046961">
    <property type="term" value="F:proton-transporting ATPase activity, rotational mechanism"/>
    <property type="evidence" value="ECO:0007669"/>
    <property type="project" value="TreeGrafter"/>
</dbReference>
<dbReference type="CDD" id="cd06503">
    <property type="entry name" value="ATP-synt_Fo_b"/>
    <property type="match status" value="1"/>
</dbReference>
<dbReference type="HAMAP" id="MF_01398">
    <property type="entry name" value="ATP_synth_b_bprime"/>
    <property type="match status" value="1"/>
</dbReference>
<dbReference type="InterPro" id="IPR002146">
    <property type="entry name" value="ATP_synth_b/b'su_bac/chlpt"/>
</dbReference>
<dbReference type="InterPro" id="IPR050059">
    <property type="entry name" value="ATP_synthase_B_chain"/>
</dbReference>
<dbReference type="PANTHER" id="PTHR33445:SF1">
    <property type="entry name" value="ATP SYNTHASE SUBUNIT B"/>
    <property type="match status" value="1"/>
</dbReference>
<dbReference type="PANTHER" id="PTHR33445">
    <property type="entry name" value="ATP SYNTHASE SUBUNIT B', CHLOROPLASTIC"/>
    <property type="match status" value="1"/>
</dbReference>
<dbReference type="Pfam" id="PF00430">
    <property type="entry name" value="ATP-synt_B"/>
    <property type="match status" value="1"/>
</dbReference>
<feature type="chain" id="PRO_0000368721" description="ATP synthase subunit b 1">
    <location>
        <begin position="1"/>
        <end position="164"/>
    </location>
</feature>
<feature type="transmembrane region" description="Helical" evidence="1">
    <location>
        <begin position="8"/>
        <end position="28"/>
    </location>
</feature>